<accession>P35027</accession>
<evidence type="ECO:0000255" key="1">
    <source>
        <dbReference type="HAMAP-Rule" id="MF_00508"/>
    </source>
</evidence>
<evidence type="ECO:0000305" key="2"/>
<dbReference type="EMBL" id="X76767">
    <property type="protein sequence ID" value="CAA54163.1"/>
    <property type="molecule type" value="Genomic_DNA"/>
</dbReference>
<dbReference type="EMBL" id="AE006641">
    <property type="protein sequence ID" value="AAK40558.1"/>
    <property type="molecule type" value="Genomic_DNA"/>
</dbReference>
<dbReference type="EMBL" id="X70701">
    <property type="protein sequence ID" value="CAA50034.1"/>
    <property type="molecule type" value="Genomic_DNA"/>
</dbReference>
<dbReference type="PIR" id="T11748">
    <property type="entry name" value="T11748"/>
</dbReference>
<dbReference type="PDB" id="9FHL">
    <property type="method" value="EM"/>
    <property type="resolution" value="2.50 A"/>
    <property type="chains" value="L=1-102"/>
</dbReference>
<dbReference type="PDB" id="9FRA">
    <property type="method" value="EM"/>
    <property type="resolution" value="2.80 A"/>
    <property type="chains" value="L=1-102"/>
</dbReference>
<dbReference type="PDB" id="9FRK">
    <property type="method" value="EM"/>
    <property type="resolution" value="3.00 A"/>
    <property type="chains" value="L=1-102"/>
</dbReference>
<dbReference type="PDB" id="9FRL">
    <property type="method" value="EM"/>
    <property type="resolution" value="2.97 A"/>
    <property type="chains" value="L=1-102"/>
</dbReference>
<dbReference type="PDB" id="9FS6">
    <property type="method" value="EM"/>
    <property type="resolution" value="2.90 A"/>
    <property type="chains" value="L=1-102"/>
</dbReference>
<dbReference type="PDB" id="9FS8">
    <property type="method" value="EM"/>
    <property type="resolution" value="3.70 A"/>
    <property type="chains" value="L=1-102"/>
</dbReference>
<dbReference type="PDB" id="9FSF">
    <property type="method" value="EM"/>
    <property type="resolution" value="2.80 A"/>
    <property type="chains" value="L=1-102"/>
</dbReference>
<dbReference type="PDB" id="9FY0">
    <property type="method" value="EM"/>
    <property type="resolution" value="2.90 A"/>
    <property type="chains" value="L=1-102"/>
</dbReference>
<dbReference type="PDBsum" id="9FHL"/>
<dbReference type="PDBsum" id="9FRA"/>
<dbReference type="PDBsum" id="9FRK"/>
<dbReference type="PDBsum" id="9FRL"/>
<dbReference type="PDBsum" id="9FS6"/>
<dbReference type="PDBsum" id="9FS8"/>
<dbReference type="PDBsum" id="9FSF"/>
<dbReference type="PDBsum" id="9FY0"/>
<dbReference type="EMDB" id="EMD-50445"/>
<dbReference type="EMDB" id="EMD-50709"/>
<dbReference type="EMDB" id="EMD-50716"/>
<dbReference type="EMDB" id="EMD-50717"/>
<dbReference type="EMDB" id="EMD-50724"/>
<dbReference type="EMDB" id="EMD-50725"/>
<dbReference type="EMDB" id="EMD-50727"/>
<dbReference type="EMDB" id="EMD-50854"/>
<dbReference type="SMR" id="P35027"/>
<dbReference type="FunCoup" id="P35027">
    <property type="interactions" value="220"/>
</dbReference>
<dbReference type="STRING" id="273057.SSO0215"/>
<dbReference type="PaxDb" id="273057-SSO0215"/>
<dbReference type="EnsemblBacteria" id="AAK40558">
    <property type="protein sequence ID" value="AAK40558"/>
    <property type="gene ID" value="SSO0215"/>
</dbReference>
<dbReference type="KEGG" id="sso:SSO0215"/>
<dbReference type="PATRIC" id="fig|273057.12.peg.213"/>
<dbReference type="eggNOG" id="arCOG01758">
    <property type="taxonomic scope" value="Archaea"/>
</dbReference>
<dbReference type="HOGENOM" id="CLU_122625_0_1_2"/>
<dbReference type="InParanoid" id="P35027"/>
<dbReference type="PhylomeDB" id="P35027"/>
<dbReference type="Proteomes" id="UP000001974">
    <property type="component" value="Chromosome"/>
</dbReference>
<dbReference type="GO" id="GO:0022627">
    <property type="term" value="C:cytosolic small ribosomal subunit"/>
    <property type="evidence" value="ECO:0000318"/>
    <property type="project" value="GO_Central"/>
</dbReference>
<dbReference type="GO" id="GO:0003735">
    <property type="term" value="F:structural constituent of ribosome"/>
    <property type="evidence" value="ECO:0000318"/>
    <property type="project" value="GO_Central"/>
</dbReference>
<dbReference type="GO" id="GO:0000049">
    <property type="term" value="F:tRNA binding"/>
    <property type="evidence" value="ECO:0007669"/>
    <property type="project" value="UniProtKB-UniRule"/>
</dbReference>
<dbReference type="GO" id="GO:0006412">
    <property type="term" value="P:translation"/>
    <property type="evidence" value="ECO:0007669"/>
    <property type="project" value="UniProtKB-UniRule"/>
</dbReference>
<dbReference type="FunFam" id="3.30.70.600:FF:000004">
    <property type="entry name" value="30S ribosomal protein S10"/>
    <property type="match status" value="1"/>
</dbReference>
<dbReference type="Gene3D" id="3.30.70.600">
    <property type="entry name" value="Ribosomal protein S10 domain"/>
    <property type="match status" value="1"/>
</dbReference>
<dbReference type="HAMAP" id="MF_00508">
    <property type="entry name" value="Ribosomal_uS10"/>
    <property type="match status" value="1"/>
</dbReference>
<dbReference type="InterPro" id="IPR001848">
    <property type="entry name" value="Ribosomal_uS10"/>
</dbReference>
<dbReference type="InterPro" id="IPR018268">
    <property type="entry name" value="Ribosomal_uS10_CS"/>
</dbReference>
<dbReference type="InterPro" id="IPR027486">
    <property type="entry name" value="Ribosomal_uS10_dom"/>
</dbReference>
<dbReference type="InterPro" id="IPR036838">
    <property type="entry name" value="Ribosomal_uS10_dom_sf"/>
</dbReference>
<dbReference type="InterPro" id="IPR005729">
    <property type="entry name" value="Ribosomal_uS10_euk/arc"/>
</dbReference>
<dbReference type="NCBIfam" id="TIGR01046">
    <property type="entry name" value="uS10_euk_arch"/>
    <property type="match status" value="1"/>
</dbReference>
<dbReference type="PANTHER" id="PTHR11700">
    <property type="entry name" value="30S RIBOSOMAL PROTEIN S10 FAMILY MEMBER"/>
    <property type="match status" value="1"/>
</dbReference>
<dbReference type="Pfam" id="PF00338">
    <property type="entry name" value="Ribosomal_S10"/>
    <property type="match status" value="1"/>
</dbReference>
<dbReference type="PRINTS" id="PR00971">
    <property type="entry name" value="RIBOSOMALS10"/>
</dbReference>
<dbReference type="SMART" id="SM01403">
    <property type="entry name" value="Ribosomal_S10"/>
    <property type="match status" value="1"/>
</dbReference>
<dbReference type="SUPFAM" id="SSF54999">
    <property type="entry name" value="Ribosomal protein S10"/>
    <property type="match status" value="1"/>
</dbReference>
<dbReference type="PROSITE" id="PS00361">
    <property type="entry name" value="RIBOSOMAL_S10"/>
    <property type="match status" value="1"/>
</dbReference>
<sequence>MPTKARIRLWSTNVENLNYVITQIRGIVEKTGIEMRGPIPLPTSKLEVPIMRLPHGEGRKKWEKWEMRVHKRLIDIAADERVMRQLMRVRVPEDVYIEIQLI</sequence>
<feature type="chain" id="PRO_0000146660" description="Small ribosomal subunit protein uS10">
    <location>
        <begin position="1"/>
        <end position="102"/>
    </location>
</feature>
<protein>
    <recommendedName>
        <fullName evidence="1">Small ribosomal subunit protein uS10</fullName>
    </recommendedName>
    <alternativeName>
        <fullName evidence="2">30S ribosomal protein S10</fullName>
    </alternativeName>
</protein>
<organism>
    <name type="scientific">Saccharolobus solfataricus (strain ATCC 35092 / DSM 1617 / JCM 11322 / P2)</name>
    <name type="common">Sulfolobus solfataricus</name>
    <dbReference type="NCBI Taxonomy" id="273057"/>
    <lineage>
        <taxon>Archaea</taxon>
        <taxon>Thermoproteota</taxon>
        <taxon>Thermoprotei</taxon>
        <taxon>Sulfolobales</taxon>
        <taxon>Sulfolobaceae</taxon>
        <taxon>Saccharolobus</taxon>
    </lineage>
</organism>
<name>RS10_SACS2</name>
<reference key="1">
    <citation type="journal article" date="1994" name="Biochim. Biophys. Acta">
        <title>The nucleotide sequence of the gene coding for the elongation factor 1 alpha in Sulfolobus solfataricus. Homology of the product with related proteins.</title>
        <authorList>
            <person name="Arcari P."/>
            <person name="Gallo M."/>
            <person name="Ianniciello G."/>
            <person name="Dello Russo A."/>
            <person name="Bocchini V."/>
        </authorList>
    </citation>
    <scope>NUCLEOTIDE SEQUENCE [GENOMIC DNA]</scope>
    <source>
        <strain>DSM 5833 / MT-4</strain>
    </source>
</reference>
<reference key="2">
    <citation type="journal article" date="2001" name="Proc. Natl. Acad. Sci. U.S.A.">
        <title>The complete genome of the crenarchaeon Sulfolobus solfataricus P2.</title>
        <authorList>
            <person name="She Q."/>
            <person name="Singh R.K."/>
            <person name="Confalonieri F."/>
            <person name="Zivanovic Y."/>
            <person name="Allard G."/>
            <person name="Awayez M.J."/>
            <person name="Chan-Weiher C.C.-Y."/>
            <person name="Clausen I.G."/>
            <person name="Curtis B.A."/>
            <person name="De Moors A."/>
            <person name="Erauso G."/>
            <person name="Fletcher C."/>
            <person name="Gordon P.M.K."/>
            <person name="Heikamp-de Jong I."/>
            <person name="Jeffries A.C."/>
            <person name="Kozera C.J."/>
            <person name="Medina N."/>
            <person name="Peng X."/>
            <person name="Thi-Ngoc H.P."/>
            <person name="Redder P."/>
            <person name="Schenk M.E."/>
            <person name="Theriault C."/>
            <person name="Tolstrup N."/>
            <person name="Charlebois R.L."/>
            <person name="Doolittle W.F."/>
            <person name="Duguet M."/>
            <person name="Gaasterland T."/>
            <person name="Garrett R.A."/>
            <person name="Ragan M.A."/>
            <person name="Sensen C.W."/>
            <person name="Van der Oost J."/>
        </authorList>
    </citation>
    <scope>NUCLEOTIDE SEQUENCE [LARGE SCALE GENOMIC DNA]</scope>
    <source>
        <strain>ATCC 35092 / DSM 1617 / JCM 11322 / P2</strain>
    </source>
</reference>
<reference key="3">
    <citation type="journal article" date="1993" name="Nucleic Acids Res.">
        <title>Primary structure of the elongation factor 1 alpha in Sulfolobus solfataricus.</title>
        <authorList>
            <person name="Arcari P."/>
            <person name="Gallo M."/>
            <person name="Ianniciello G."/>
            <person name="Dello Russo A."/>
            <person name="Bocchini V."/>
        </authorList>
    </citation>
    <scope>NUCLEOTIDE SEQUENCE [GENOMIC DNA] OF 1-5</scope>
    <source>
        <strain>DSM 5833 / MT-4</strain>
    </source>
</reference>
<gene>
    <name evidence="1" type="primary">rps10</name>
    <name evidence="1" type="synonym">rps10Ab</name>
    <name type="ordered locus">SSO0215</name>
</gene>
<keyword id="KW-0002">3D-structure</keyword>
<keyword id="KW-1185">Reference proteome</keyword>
<keyword id="KW-0687">Ribonucleoprotein</keyword>
<keyword id="KW-0689">Ribosomal protein</keyword>
<comment type="function">
    <text evidence="1">Involved in the binding of tRNA to the ribosomes.</text>
</comment>
<comment type="subunit">
    <text evidence="1">Part of the 30S ribosomal subunit.</text>
</comment>
<comment type="similarity">
    <text evidence="1">Belongs to the universal ribosomal protein uS10 family.</text>
</comment>
<proteinExistence type="evidence at protein level"/>